<gene>
    <name type="primary">cpeB</name>
    <name type="synonym">rpeB</name>
</gene>
<accession>Q02037</accession>
<comment type="function">
    <text>Light-harvesting photosynthetic bile pigment-protein from the phycobiliprotein complex.</text>
</comment>
<comment type="subunit">
    <text evidence="1">Heteromer of 6 alpha, 6 beta and one gamma chain.</text>
</comment>
<comment type="subcellular location">
    <subcellularLocation>
        <location evidence="1">Plastid</location>
        <location evidence="1">Chloroplast thylakoid membrane</location>
        <topology evidence="1">Peripheral membrane protein</topology>
        <orientation evidence="1">Stromal side</orientation>
    </subcellularLocation>
    <text evidence="1">Forms the periphery of the phycobilisome rod.</text>
</comment>
<comment type="PTM">
    <text evidence="1">Contains two covalently linked phycoerythrobilin chromophores and one covalently linked phycourobilin chromophore.</text>
</comment>
<comment type="similarity">
    <text evidence="2">Belongs to the phycobiliprotein family.</text>
</comment>
<feature type="chain" id="PRO_0000199201" description="B-phycoerythrin beta chain">
    <location>
        <begin position="1"/>
        <end position="177"/>
    </location>
</feature>
<feature type="binding site" description="covalent" evidence="1">
    <location>
        <position position="50"/>
    </location>
    <ligand>
        <name>phycourobilin</name>
        <dbReference type="ChEBI" id="CHEBI:189062"/>
    </ligand>
</feature>
<feature type="binding site" description="covalent" evidence="1">
    <location>
        <position position="61"/>
    </location>
    <ligand>
        <name>phycourobilin</name>
        <dbReference type="ChEBI" id="CHEBI:189062"/>
    </ligand>
</feature>
<feature type="binding site" description="covalent" evidence="1">
    <location>
        <position position="82"/>
    </location>
    <ligand>
        <name>(2R,3E)-phycoerythrobilin</name>
        <dbReference type="ChEBI" id="CHEBI:85276"/>
        <label>1</label>
    </ligand>
</feature>
<feature type="binding site" description="covalent" evidence="1">
    <location>
        <position position="158"/>
    </location>
    <ligand>
        <name>(2R,3E)-phycoerythrobilin</name>
        <dbReference type="ChEBI" id="CHEBI:85276"/>
        <label>2</label>
    </ligand>
</feature>
<feature type="modified residue" description="N4-methylasparagine" evidence="1">
    <location>
        <position position="72"/>
    </location>
</feature>
<organism>
    <name type="scientific">Rhodella violacea</name>
    <name type="common">Red alga</name>
    <dbReference type="NCBI Taxonomy" id="2801"/>
    <lineage>
        <taxon>Eukaryota</taxon>
        <taxon>Rhodophyta</taxon>
        <taxon>Rhodellophyceae</taxon>
        <taxon>Rhodellales</taxon>
        <taxon>Rhodellaceae</taxon>
        <taxon>Rhodella</taxon>
    </lineage>
</organism>
<name>PHEB_RHOVL</name>
<dbReference type="EMBL" id="L02188">
    <property type="protein sequence ID" value="AAB01575.1"/>
    <property type="molecule type" value="Genomic_DNA"/>
</dbReference>
<dbReference type="PIR" id="A47207">
    <property type="entry name" value="A47207"/>
</dbReference>
<dbReference type="SMR" id="Q02037"/>
<dbReference type="GO" id="GO:0009535">
    <property type="term" value="C:chloroplast thylakoid membrane"/>
    <property type="evidence" value="ECO:0007669"/>
    <property type="project" value="UniProtKB-SubCell"/>
</dbReference>
<dbReference type="GO" id="GO:0030089">
    <property type="term" value="C:phycobilisome"/>
    <property type="evidence" value="ECO:0007669"/>
    <property type="project" value="UniProtKB-KW"/>
</dbReference>
<dbReference type="GO" id="GO:0015979">
    <property type="term" value="P:photosynthesis"/>
    <property type="evidence" value="ECO:0007669"/>
    <property type="project" value="UniProtKB-KW"/>
</dbReference>
<dbReference type="CDD" id="cd14767">
    <property type="entry name" value="PE_beta-like"/>
    <property type="match status" value="1"/>
</dbReference>
<dbReference type="Gene3D" id="1.10.490.20">
    <property type="entry name" value="Phycocyanins"/>
    <property type="match status" value="1"/>
</dbReference>
<dbReference type="InterPro" id="IPR009050">
    <property type="entry name" value="Globin-like_sf"/>
</dbReference>
<dbReference type="InterPro" id="IPR012128">
    <property type="entry name" value="Phycobilisome_asu/bsu"/>
</dbReference>
<dbReference type="InterPro" id="IPR038719">
    <property type="entry name" value="Phycobilisome_asu/bsu_sf"/>
</dbReference>
<dbReference type="PANTHER" id="PTHR34011:SF7">
    <property type="entry name" value="C-PHYCOCYANIN BETA SUBUNIT"/>
    <property type="match status" value="1"/>
</dbReference>
<dbReference type="PANTHER" id="PTHR34011">
    <property type="entry name" value="PHYCOBILISOME 32.1 KDA LINKER POLYPEPTIDE, PHYCOCYANIN-ASSOCIATED, ROD 2-RELATED"/>
    <property type="match status" value="1"/>
</dbReference>
<dbReference type="Pfam" id="PF00502">
    <property type="entry name" value="Phycobilisome"/>
    <property type="match status" value="1"/>
</dbReference>
<dbReference type="PIRSF" id="PIRSF000081">
    <property type="entry name" value="Phycocyanin"/>
    <property type="match status" value="1"/>
</dbReference>
<dbReference type="SUPFAM" id="SSF46458">
    <property type="entry name" value="Globin-like"/>
    <property type="match status" value="1"/>
</dbReference>
<protein>
    <recommendedName>
        <fullName>B-phycoerythrin beta chain</fullName>
    </recommendedName>
</protein>
<sequence length="177" mass="18603">MLDAFSRVVVNSDTKAAYVGGSDLQALKKFIADGNKRLDSVNAIVSNASCVVSDAVSGMICENPGLITPGGNCYTNRRMAACLRDGEIIIRYVSYALLSGDPSVLEDRCLNGLKETYIALGVPTNSNARAVDIMKASVVALINNTATLRKMPTPSGDCSALAAEAGSYFDRVNSALS</sequence>
<proteinExistence type="evidence at protein level"/>
<evidence type="ECO:0000250" key="1"/>
<evidence type="ECO:0000305" key="2"/>
<reference key="1">
    <citation type="journal article" date="1992" name="Proc. Natl. Acad. Sci. U.S.A.">
        <title>Characterization of the genes encoding phycoerythrin in the red alga Rhodella violacea: evidence for a splitting of the rpeB gene by an intron.</title>
        <authorList>
            <person name="Bernard C."/>
            <person name="Thomas J.C."/>
            <person name="Mazel D."/>
            <person name="Mousseau A."/>
            <person name="Castets A.M."/>
            <person name="Tandeau de Marsac N."/>
            <person name="Dubacq J.P."/>
        </authorList>
    </citation>
    <scope>NUCLEOTIDE SEQUENCE [GENOMIC DNA]</scope>
    <scope>PROTEIN SEQUENCE OF 1-20</scope>
</reference>
<keyword id="KW-0042">Antenna complex</keyword>
<keyword id="KW-0089">Bile pigment</keyword>
<keyword id="KW-0150">Chloroplast</keyword>
<keyword id="KW-0157">Chromophore</keyword>
<keyword id="KW-0903">Direct protein sequencing</keyword>
<keyword id="KW-0249">Electron transport</keyword>
<keyword id="KW-0472">Membrane</keyword>
<keyword id="KW-0488">Methylation</keyword>
<keyword id="KW-0602">Photosynthesis</keyword>
<keyword id="KW-0605">Phycobilisome</keyword>
<keyword id="KW-0934">Plastid</keyword>
<keyword id="KW-0793">Thylakoid</keyword>
<keyword id="KW-0813">Transport</keyword>
<geneLocation type="chloroplast"/>